<evidence type="ECO:0000255" key="1">
    <source>
        <dbReference type="HAMAP-Rule" id="MF_01374"/>
    </source>
</evidence>
<gene>
    <name evidence="1" type="primary">gloB</name>
    <name type="ordered locus">RL4340</name>
</gene>
<feature type="chain" id="PRO_0000309686" description="Hydroxyacylglutathione hydrolase">
    <location>
        <begin position="1"/>
        <end position="256"/>
    </location>
</feature>
<feature type="binding site" evidence="1">
    <location>
        <position position="57"/>
    </location>
    <ligand>
        <name>Zn(2+)</name>
        <dbReference type="ChEBI" id="CHEBI:29105"/>
        <label>1</label>
    </ligand>
</feature>
<feature type="binding site" evidence="1">
    <location>
        <position position="59"/>
    </location>
    <ligand>
        <name>Zn(2+)</name>
        <dbReference type="ChEBI" id="CHEBI:29105"/>
        <label>1</label>
    </ligand>
</feature>
<feature type="binding site" evidence="1">
    <location>
        <position position="61"/>
    </location>
    <ligand>
        <name>Zn(2+)</name>
        <dbReference type="ChEBI" id="CHEBI:29105"/>
        <label>2</label>
    </ligand>
</feature>
<feature type="binding site" evidence="1">
    <location>
        <position position="62"/>
    </location>
    <ligand>
        <name>Zn(2+)</name>
        <dbReference type="ChEBI" id="CHEBI:29105"/>
        <label>2</label>
    </ligand>
</feature>
<feature type="binding site" evidence="1">
    <location>
        <position position="115"/>
    </location>
    <ligand>
        <name>Zn(2+)</name>
        <dbReference type="ChEBI" id="CHEBI:29105"/>
        <label>1</label>
    </ligand>
</feature>
<feature type="binding site" evidence="1">
    <location>
        <position position="134"/>
    </location>
    <ligand>
        <name>Zn(2+)</name>
        <dbReference type="ChEBI" id="CHEBI:29105"/>
        <label>1</label>
    </ligand>
</feature>
<feature type="binding site" evidence="1">
    <location>
        <position position="134"/>
    </location>
    <ligand>
        <name>Zn(2+)</name>
        <dbReference type="ChEBI" id="CHEBI:29105"/>
        <label>2</label>
    </ligand>
</feature>
<feature type="binding site" evidence="1">
    <location>
        <position position="172"/>
    </location>
    <ligand>
        <name>Zn(2+)</name>
        <dbReference type="ChEBI" id="CHEBI:29105"/>
        <label>2</label>
    </ligand>
</feature>
<comment type="function">
    <text evidence="1">Thiolesterase that catalyzes the hydrolysis of S-D-lactoyl-glutathione to form glutathione and D-lactic acid.</text>
</comment>
<comment type="catalytic activity">
    <reaction evidence="1">
        <text>an S-(2-hydroxyacyl)glutathione + H2O = a 2-hydroxy carboxylate + glutathione + H(+)</text>
        <dbReference type="Rhea" id="RHEA:21864"/>
        <dbReference type="ChEBI" id="CHEBI:15377"/>
        <dbReference type="ChEBI" id="CHEBI:15378"/>
        <dbReference type="ChEBI" id="CHEBI:57925"/>
        <dbReference type="ChEBI" id="CHEBI:58896"/>
        <dbReference type="ChEBI" id="CHEBI:71261"/>
        <dbReference type="EC" id="3.1.2.6"/>
    </reaction>
</comment>
<comment type="cofactor">
    <cofactor evidence="1">
        <name>Zn(2+)</name>
        <dbReference type="ChEBI" id="CHEBI:29105"/>
    </cofactor>
    <text evidence="1">Binds 2 Zn(2+) ions per subunit.</text>
</comment>
<comment type="pathway">
    <text evidence="1">Secondary metabolite metabolism; methylglyoxal degradation; (R)-lactate from methylglyoxal: step 2/2.</text>
</comment>
<comment type="subunit">
    <text evidence="1">Monomer.</text>
</comment>
<comment type="similarity">
    <text evidence="1">Belongs to the metallo-beta-lactamase superfamily. Glyoxalase II family.</text>
</comment>
<name>GLO2_RHIJ3</name>
<reference key="1">
    <citation type="journal article" date="2006" name="Genome Biol.">
        <title>The genome of Rhizobium leguminosarum has recognizable core and accessory components.</title>
        <authorList>
            <person name="Young J.P.W."/>
            <person name="Crossman L.C."/>
            <person name="Johnston A.W.B."/>
            <person name="Thomson N.R."/>
            <person name="Ghazoui Z.F."/>
            <person name="Hull K.H."/>
            <person name="Wexler M."/>
            <person name="Curson A.R.J."/>
            <person name="Todd J.D."/>
            <person name="Poole P.S."/>
            <person name="Mauchline T.H."/>
            <person name="East A.K."/>
            <person name="Quail M.A."/>
            <person name="Churcher C."/>
            <person name="Arrowsmith C."/>
            <person name="Cherevach I."/>
            <person name="Chillingworth T."/>
            <person name="Clarke K."/>
            <person name="Cronin A."/>
            <person name="Davis P."/>
            <person name="Fraser A."/>
            <person name="Hance Z."/>
            <person name="Hauser H."/>
            <person name="Jagels K."/>
            <person name="Moule S."/>
            <person name="Mungall K."/>
            <person name="Norbertczak H."/>
            <person name="Rabbinowitsch E."/>
            <person name="Sanders M."/>
            <person name="Simmonds M."/>
            <person name="Whitehead S."/>
            <person name="Parkhill J."/>
        </authorList>
    </citation>
    <scope>NUCLEOTIDE SEQUENCE [LARGE SCALE GENOMIC DNA]</scope>
    <source>
        <strain>DSM 114642 / LMG 32736 / 3841</strain>
    </source>
</reference>
<organism>
    <name type="scientific">Rhizobium johnstonii (strain DSM 114642 / LMG 32736 / 3841)</name>
    <name type="common">Rhizobium leguminosarum bv. viciae</name>
    <dbReference type="NCBI Taxonomy" id="216596"/>
    <lineage>
        <taxon>Bacteria</taxon>
        <taxon>Pseudomonadati</taxon>
        <taxon>Pseudomonadota</taxon>
        <taxon>Alphaproteobacteria</taxon>
        <taxon>Hyphomicrobiales</taxon>
        <taxon>Rhizobiaceae</taxon>
        <taxon>Rhizobium/Agrobacterium group</taxon>
        <taxon>Rhizobium</taxon>
        <taxon>Rhizobium johnstonii</taxon>
    </lineage>
</organism>
<accession>Q1MB56</accession>
<protein>
    <recommendedName>
        <fullName evidence="1">Hydroxyacylglutathione hydrolase</fullName>
        <ecNumber evidence="1">3.1.2.6</ecNumber>
    </recommendedName>
    <alternativeName>
        <fullName evidence="1">Glyoxalase II</fullName>
        <shortName evidence="1">Glx II</shortName>
    </alternativeName>
</protein>
<sequence length="256" mass="28517">MKPLELDVFLCRTDNFGVLVHDPETGFTAAIDAPEEAPILEAATRRGWKITHIFTTHHHTDHVTANLALKEQFGCEIIGPINEAVAIPGLDRAMADGDSFLFGDHTVNVIETPGHTAGHICYHFVDDKLLFAADTLFALGCGRLFERPAADMWHSLQKLAVLPDETAVYFGHEYTLSNARFALTVDPDNERLKSRAAEIEALRADGKFTIPTTLGLEKETNPFLRAADPAIRRNLVMEGKTNEEVFAEIRKRKDHF</sequence>
<keyword id="KW-0378">Hydrolase</keyword>
<keyword id="KW-0479">Metal-binding</keyword>
<keyword id="KW-0862">Zinc</keyword>
<proteinExistence type="inferred from homology"/>
<dbReference type="EC" id="3.1.2.6" evidence="1"/>
<dbReference type="EMBL" id="AM236080">
    <property type="protein sequence ID" value="CAK09828.1"/>
    <property type="molecule type" value="Genomic_DNA"/>
</dbReference>
<dbReference type="RefSeq" id="WP_011653724.1">
    <property type="nucleotide sequence ID" value="NC_008380.1"/>
</dbReference>
<dbReference type="SMR" id="Q1MB56"/>
<dbReference type="EnsemblBacteria" id="CAK09828">
    <property type="protein sequence ID" value="CAK09828"/>
    <property type="gene ID" value="RL4340"/>
</dbReference>
<dbReference type="KEGG" id="rle:RL4340"/>
<dbReference type="eggNOG" id="COG0491">
    <property type="taxonomic scope" value="Bacteria"/>
</dbReference>
<dbReference type="HOGENOM" id="CLU_030571_4_1_5"/>
<dbReference type="UniPathway" id="UPA00619">
    <property type="reaction ID" value="UER00676"/>
</dbReference>
<dbReference type="Proteomes" id="UP000006575">
    <property type="component" value="Chromosome"/>
</dbReference>
<dbReference type="GO" id="GO:0004416">
    <property type="term" value="F:hydroxyacylglutathione hydrolase activity"/>
    <property type="evidence" value="ECO:0007669"/>
    <property type="project" value="UniProtKB-UniRule"/>
</dbReference>
<dbReference type="GO" id="GO:0046872">
    <property type="term" value="F:metal ion binding"/>
    <property type="evidence" value="ECO:0007669"/>
    <property type="project" value="UniProtKB-KW"/>
</dbReference>
<dbReference type="GO" id="GO:0019243">
    <property type="term" value="P:methylglyoxal catabolic process to D-lactate via S-lactoyl-glutathione"/>
    <property type="evidence" value="ECO:0007669"/>
    <property type="project" value="InterPro"/>
</dbReference>
<dbReference type="CDD" id="cd07723">
    <property type="entry name" value="hydroxyacylglutathione_hydrolase_MBL-fold"/>
    <property type="match status" value="1"/>
</dbReference>
<dbReference type="Gene3D" id="3.60.15.10">
    <property type="entry name" value="Ribonuclease Z/Hydroxyacylglutathione hydrolase-like"/>
    <property type="match status" value="1"/>
</dbReference>
<dbReference type="HAMAP" id="MF_01374">
    <property type="entry name" value="Glyoxalase_2"/>
    <property type="match status" value="1"/>
</dbReference>
<dbReference type="InterPro" id="IPR035680">
    <property type="entry name" value="Clx_II_MBL"/>
</dbReference>
<dbReference type="InterPro" id="IPR050110">
    <property type="entry name" value="Glyoxalase_II_hydrolase"/>
</dbReference>
<dbReference type="InterPro" id="IPR032282">
    <property type="entry name" value="HAGH_C"/>
</dbReference>
<dbReference type="InterPro" id="IPR017782">
    <property type="entry name" value="Hydroxyacylglutathione_Hdrlase"/>
</dbReference>
<dbReference type="InterPro" id="IPR001279">
    <property type="entry name" value="Metallo-B-lactamas"/>
</dbReference>
<dbReference type="InterPro" id="IPR036866">
    <property type="entry name" value="RibonucZ/Hydroxyglut_hydro"/>
</dbReference>
<dbReference type="NCBIfam" id="TIGR03413">
    <property type="entry name" value="GSH_gloB"/>
    <property type="match status" value="1"/>
</dbReference>
<dbReference type="PANTHER" id="PTHR43705">
    <property type="entry name" value="HYDROXYACYLGLUTATHIONE HYDROLASE"/>
    <property type="match status" value="1"/>
</dbReference>
<dbReference type="PANTHER" id="PTHR43705:SF1">
    <property type="entry name" value="HYDROXYACYLGLUTATHIONE HYDROLASE GLOB"/>
    <property type="match status" value="1"/>
</dbReference>
<dbReference type="Pfam" id="PF16123">
    <property type="entry name" value="HAGH_C"/>
    <property type="match status" value="1"/>
</dbReference>
<dbReference type="Pfam" id="PF00753">
    <property type="entry name" value="Lactamase_B"/>
    <property type="match status" value="1"/>
</dbReference>
<dbReference type="PIRSF" id="PIRSF005457">
    <property type="entry name" value="Glx"/>
    <property type="match status" value="1"/>
</dbReference>
<dbReference type="SMART" id="SM00849">
    <property type="entry name" value="Lactamase_B"/>
    <property type="match status" value="1"/>
</dbReference>
<dbReference type="SUPFAM" id="SSF56281">
    <property type="entry name" value="Metallo-hydrolase/oxidoreductase"/>
    <property type="match status" value="1"/>
</dbReference>